<keyword id="KW-0963">Cytoplasm</keyword>
<keyword id="KW-0269">Exonuclease</keyword>
<keyword id="KW-0378">Hydrolase</keyword>
<keyword id="KW-0540">Nuclease</keyword>
<dbReference type="EC" id="3.1.11.6" evidence="1"/>
<dbReference type="EMBL" id="CP000847">
    <property type="protein sequence ID" value="ABV74820.1"/>
    <property type="molecule type" value="Genomic_DNA"/>
</dbReference>
<dbReference type="RefSeq" id="WP_012149454.1">
    <property type="nucleotide sequence ID" value="NC_009881.1"/>
</dbReference>
<dbReference type="SMR" id="A8GN45"/>
<dbReference type="STRING" id="293614.A1C_02625"/>
<dbReference type="KEGG" id="rak:A1C_02625"/>
<dbReference type="eggNOG" id="COG1722">
    <property type="taxonomic scope" value="Bacteria"/>
</dbReference>
<dbReference type="HOGENOM" id="CLU_145918_0_3_5"/>
<dbReference type="Proteomes" id="UP000006830">
    <property type="component" value="Chromosome"/>
</dbReference>
<dbReference type="GO" id="GO:0005829">
    <property type="term" value="C:cytosol"/>
    <property type="evidence" value="ECO:0007669"/>
    <property type="project" value="TreeGrafter"/>
</dbReference>
<dbReference type="GO" id="GO:0009318">
    <property type="term" value="C:exodeoxyribonuclease VII complex"/>
    <property type="evidence" value="ECO:0007669"/>
    <property type="project" value="InterPro"/>
</dbReference>
<dbReference type="GO" id="GO:0008855">
    <property type="term" value="F:exodeoxyribonuclease VII activity"/>
    <property type="evidence" value="ECO:0007669"/>
    <property type="project" value="UniProtKB-UniRule"/>
</dbReference>
<dbReference type="GO" id="GO:0006308">
    <property type="term" value="P:DNA catabolic process"/>
    <property type="evidence" value="ECO:0007669"/>
    <property type="project" value="UniProtKB-UniRule"/>
</dbReference>
<dbReference type="Gene3D" id="1.10.287.1040">
    <property type="entry name" value="Exonuclease VII, small subunit"/>
    <property type="match status" value="1"/>
</dbReference>
<dbReference type="HAMAP" id="MF_00337">
    <property type="entry name" value="Exonuc_7_S"/>
    <property type="match status" value="1"/>
</dbReference>
<dbReference type="InterPro" id="IPR003761">
    <property type="entry name" value="Exonuc_VII_S"/>
</dbReference>
<dbReference type="InterPro" id="IPR037004">
    <property type="entry name" value="Exonuc_VII_ssu_sf"/>
</dbReference>
<dbReference type="NCBIfam" id="NF002140">
    <property type="entry name" value="PRK00977.1-4"/>
    <property type="match status" value="1"/>
</dbReference>
<dbReference type="NCBIfam" id="TIGR01280">
    <property type="entry name" value="xseB"/>
    <property type="match status" value="1"/>
</dbReference>
<dbReference type="PANTHER" id="PTHR34137">
    <property type="entry name" value="EXODEOXYRIBONUCLEASE 7 SMALL SUBUNIT"/>
    <property type="match status" value="1"/>
</dbReference>
<dbReference type="PANTHER" id="PTHR34137:SF1">
    <property type="entry name" value="EXODEOXYRIBONUCLEASE 7 SMALL SUBUNIT"/>
    <property type="match status" value="1"/>
</dbReference>
<dbReference type="Pfam" id="PF02609">
    <property type="entry name" value="Exonuc_VII_S"/>
    <property type="match status" value="1"/>
</dbReference>
<dbReference type="PIRSF" id="PIRSF006488">
    <property type="entry name" value="Exonuc_VII_S"/>
    <property type="match status" value="1"/>
</dbReference>
<dbReference type="SUPFAM" id="SSF116842">
    <property type="entry name" value="XseB-like"/>
    <property type="match status" value="1"/>
</dbReference>
<comment type="function">
    <text evidence="1">Bidirectionally degrades single-stranded DNA into large acid-insoluble oligonucleotides, which are then degraded further into small acid-soluble oligonucleotides.</text>
</comment>
<comment type="catalytic activity">
    <reaction evidence="1">
        <text>Exonucleolytic cleavage in either 5'- to 3'- or 3'- to 5'-direction to yield nucleoside 5'-phosphates.</text>
        <dbReference type="EC" id="3.1.11.6"/>
    </reaction>
</comment>
<comment type="subunit">
    <text evidence="1">Heterooligomer composed of large and small subunits.</text>
</comment>
<comment type="subcellular location">
    <subcellularLocation>
        <location evidence="1">Cytoplasm</location>
    </subcellularLocation>
</comment>
<comment type="similarity">
    <text evidence="1">Belongs to the XseB family.</text>
</comment>
<sequence>MTNTKTLEENISFESALKELEEIVKKIDNGQESLEMAVNSFERGILLKNHCEKKLKEARLKIEKITKLADSTVVLEETEV</sequence>
<reference key="1">
    <citation type="submission" date="2007-09" db="EMBL/GenBank/DDBJ databases">
        <title>Complete genome sequence of Rickettsia akari.</title>
        <authorList>
            <person name="Madan A."/>
            <person name="Fahey J."/>
            <person name="Helton E."/>
            <person name="Ketteman M."/>
            <person name="Madan A."/>
            <person name="Rodrigues S."/>
            <person name="Sanchez A."/>
            <person name="Whiting M."/>
            <person name="Dasch G."/>
            <person name="Eremeeva M."/>
        </authorList>
    </citation>
    <scope>NUCLEOTIDE SEQUENCE [LARGE SCALE GENOMIC DNA]</scope>
    <source>
        <strain>Hartford</strain>
    </source>
</reference>
<protein>
    <recommendedName>
        <fullName evidence="1">Exodeoxyribonuclease 7 small subunit</fullName>
        <ecNumber evidence="1">3.1.11.6</ecNumber>
    </recommendedName>
    <alternativeName>
        <fullName evidence="1">Exodeoxyribonuclease VII small subunit</fullName>
        <shortName evidence="1">Exonuclease VII small subunit</shortName>
    </alternativeName>
</protein>
<organism>
    <name type="scientific">Rickettsia akari (strain Hartford)</name>
    <dbReference type="NCBI Taxonomy" id="293614"/>
    <lineage>
        <taxon>Bacteria</taxon>
        <taxon>Pseudomonadati</taxon>
        <taxon>Pseudomonadota</taxon>
        <taxon>Alphaproteobacteria</taxon>
        <taxon>Rickettsiales</taxon>
        <taxon>Rickettsiaceae</taxon>
        <taxon>Rickettsieae</taxon>
        <taxon>Rickettsia</taxon>
        <taxon>spotted fever group</taxon>
    </lineage>
</organism>
<proteinExistence type="inferred from homology"/>
<name>EX7S_RICAH</name>
<accession>A8GN45</accession>
<evidence type="ECO:0000255" key="1">
    <source>
        <dbReference type="HAMAP-Rule" id="MF_00337"/>
    </source>
</evidence>
<gene>
    <name evidence="1" type="primary">xseB</name>
    <name type="ordered locus">A1C_02625</name>
</gene>
<feature type="chain" id="PRO_1000019589" description="Exodeoxyribonuclease 7 small subunit">
    <location>
        <begin position="1"/>
        <end position="80"/>
    </location>
</feature>